<evidence type="ECO:0000255" key="1">
    <source>
        <dbReference type="HAMAP-Rule" id="MF_00505"/>
    </source>
</evidence>
<organism>
    <name type="scientific">Burkholderia pseudomallei (strain 1106a)</name>
    <dbReference type="NCBI Taxonomy" id="357348"/>
    <lineage>
        <taxon>Bacteria</taxon>
        <taxon>Pseudomonadati</taxon>
        <taxon>Pseudomonadota</taxon>
        <taxon>Betaproteobacteria</taxon>
        <taxon>Burkholderiales</taxon>
        <taxon>Burkholderiaceae</taxon>
        <taxon>Burkholderia</taxon>
        <taxon>pseudomallei group</taxon>
    </lineage>
</organism>
<feature type="chain" id="PRO_1000014904" description="Chaperone protein HtpG">
    <location>
        <begin position="1"/>
        <end position="632"/>
    </location>
</feature>
<feature type="region of interest" description="A; substrate-binding" evidence="1">
    <location>
        <begin position="1"/>
        <end position="339"/>
    </location>
</feature>
<feature type="region of interest" description="B" evidence="1">
    <location>
        <begin position="340"/>
        <end position="559"/>
    </location>
</feature>
<feature type="region of interest" description="C" evidence="1">
    <location>
        <begin position="560"/>
        <end position="632"/>
    </location>
</feature>
<keyword id="KW-0067">ATP-binding</keyword>
<keyword id="KW-0143">Chaperone</keyword>
<keyword id="KW-0963">Cytoplasm</keyword>
<keyword id="KW-0547">Nucleotide-binding</keyword>
<keyword id="KW-0346">Stress response</keyword>
<sequence>MTQQTMSFQAEVKQLLHLMIHSLYSNKEIFLRELVSNASDAADKLRFEALENNALYESDPNLRIRLSFDKAARTITIDDNGIGMSRDEAIANLGTIARSGTKEFFSKLSGDQQKDAALIGQFGVGFYSGFIVADRITVETRRAGLPASEGVRWESAGEGDFQVDTIERAARGTTITLHLREGEDELLSSYRLKSIVQKYSDHVALPILMKKEEWDQEKGEMVEKDEDETINQASALWTRAKSEVTDEQYKQFYQHVAHDHQDPLAWTHNRVEGRSEYTQLLFVPSHAPFDLWNRDYRGGLKLYVKRVFIMDDAEQLLPQYLRFIKGVVDSSDLPLNVSREILQESRDVKAIREGVTKRALSMLEELANAEDDAGKEKYKTFWSAFGQVLKEGVGEDHANRERVAKLLRFASTHGDTDAQDVALADYVARMKPEQTKLYYVTADTWQAAKNSPHLEVFRKKGVEVLLLTDRVDEWMLSFLHEFDGKPLASVARGDLDLGALNDDEKKAQEETGEAMKPVVDKMKETLGEKVKDVRVTFRLTDSPSCLVADDNDMSGYLQRMLKAAGQSAPSFQPILEINPEHPLVKALKADGADFGDWCHLLFDQALLAEGGALEDPASFVKRTNALLLSRAA</sequence>
<dbReference type="EMBL" id="CP000572">
    <property type="protein sequence ID" value="ABN89127.1"/>
    <property type="molecule type" value="Genomic_DNA"/>
</dbReference>
<dbReference type="RefSeq" id="WP_004522478.1">
    <property type="nucleotide sequence ID" value="NC_009076.1"/>
</dbReference>
<dbReference type="SMR" id="A3NSX5"/>
<dbReference type="KEGG" id="bpl:BURPS1106A_1167"/>
<dbReference type="HOGENOM" id="CLU_006684_3_0_4"/>
<dbReference type="Proteomes" id="UP000006738">
    <property type="component" value="Chromosome I"/>
</dbReference>
<dbReference type="GO" id="GO:0005737">
    <property type="term" value="C:cytoplasm"/>
    <property type="evidence" value="ECO:0007669"/>
    <property type="project" value="UniProtKB-SubCell"/>
</dbReference>
<dbReference type="GO" id="GO:0005524">
    <property type="term" value="F:ATP binding"/>
    <property type="evidence" value="ECO:0007669"/>
    <property type="project" value="UniProtKB-UniRule"/>
</dbReference>
<dbReference type="GO" id="GO:0016887">
    <property type="term" value="F:ATP hydrolysis activity"/>
    <property type="evidence" value="ECO:0007669"/>
    <property type="project" value="InterPro"/>
</dbReference>
<dbReference type="GO" id="GO:0140662">
    <property type="term" value="F:ATP-dependent protein folding chaperone"/>
    <property type="evidence" value="ECO:0007669"/>
    <property type="project" value="InterPro"/>
</dbReference>
<dbReference type="GO" id="GO:0051082">
    <property type="term" value="F:unfolded protein binding"/>
    <property type="evidence" value="ECO:0007669"/>
    <property type="project" value="UniProtKB-UniRule"/>
</dbReference>
<dbReference type="CDD" id="cd16927">
    <property type="entry name" value="HATPase_Hsp90-like"/>
    <property type="match status" value="1"/>
</dbReference>
<dbReference type="FunFam" id="3.30.230.80:FF:000002">
    <property type="entry name" value="Molecular chaperone HtpG"/>
    <property type="match status" value="1"/>
</dbReference>
<dbReference type="FunFam" id="3.30.565.10:FF:000009">
    <property type="entry name" value="Molecular chaperone HtpG"/>
    <property type="match status" value="1"/>
</dbReference>
<dbReference type="Gene3D" id="3.30.230.80">
    <property type="match status" value="1"/>
</dbReference>
<dbReference type="Gene3D" id="3.40.50.11260">
    <property type="match status" value="1"/>
</dbReference>
<dbReference type="Gene3D" id="1.20.120.790">
    <property type="entry name" value="Heat shock protein 90, C-terminal domain"/>
    <property type="match status" value="1"/>
</dbReference>
<dbReference type="Gene3D" id="3.30.565.10">
    <property type="entry name" value="Histidine kinase-like ATPase, C-terminal domain"/>
    <property type="match status" value="1"/>
</dbReference>
<dbReference type="HAMAP" id="MF_00505">
    <property type="entry name" value="HSP90"/>
    <property type="match status" value="1"/>
</dbReference>
<dbReference type="InterPro" id="IPR036890">
    <property type="entry name" value="HATPase_C_sf"/>
</dbReference>
<dbReference type="InterPro" id="IPR019805">
    <property type="entry name" value="Heat_shock_protein_90_CS"/>
</dbReference>
<dbReference type="InterPro" id="IPR037196">
    <property type="entry name" value="HSP90_C"/>
</dbReference>
<dbReference type="InterPro" id="IPR001404">
    <property type="entry name" value="Hsp90_fam"/>
</dbReference>
<dbReference type="InterPro" id="IPR020575">
    <property type="entry name" value="Hsp90_N"/>
</dbReference>
<dbReference type="InterPro" id="IPR020568">
    <property type="entry name" value="Ribosomal_Su5_D2-typ_SF"/>
</dbReference>
<dbReference type="NCBIfam" id="NF003555">
    <property type="entry name" value="PRK05218.1"/>
    <property type="match status" value="1"/>
</dbReference>
<dbReference type="PANTHER" id="PTHR11528">
    <property type="entry name" value="HEAT SHOCK PROTEIN 90 FAMILY MEMBER"/>
    <property type="match status" value="1"/>
</dbReference>
<dbReference type="Pfam" id="PF13589">
    <property type="entry name" value="HATPase_c_3"/>
    <property type="match status" value="1"/>
</dbReference>
<dbReference type="Pfam" id="PF00183">
    <property type="entry name" value="HSP90"/>
    <property type="match status" value="1"/>
</dbReference>
<dbReference type="PIRSF" id="PIRSF002583">
    <property type="entry name" value="Hsp90"/>
    <property type="match status" value="1"/>
</dbReference>
<dbReference type="PRINTS" id="PR00775">
    <property type="entry name" value="HEATSHOCK90"/>
</dbReference>
<dbReference type="SMART" id="SM00387">
    <property type="entry name" value="HATPase_c"/>
    <property type="match status" value="1"/>
</dbReference>
<dbReference type="SUPFAM" id="SSF55874">
    <property type="entry name" value="ATPase domain of HSP90 chaperone/DNA topoisomerase II/histidine kinase"/>
    <property type="match status" value="1"/>
</dbReference>
<dbReference type="SUPFAM" id="SSF110942">
    <property type="entry name" value="HSP90 C-terminal domain"/>
    <property type="match status" value="1"/>
</dbReference>
<dbReference type="SUPFAM" id="SSF54211">
    <property type="entry name" value="Ribosomal protein S5 domain 2-like"/>
    <property type="match status" value="1"/>
</dbReference>
<dbReference type="PROSITE" id="PS00298">
    <property type="entry name" value="HSP90"/>
    <property type="match status" value="1"/>
</dbReference>
<reference key="1">
    <citation type="journal article" date="2010" name="Genome Biol. Evol.">
        <title>Continuing evolution of Burkholderia mallei through genome reduction and large-scale rearrangements.</title>
        <authorList>
            <person name="Losada L."/>
            <person name="Ronning C.M."/>
            <person name="DeShazer D."/>
            <person name="Woods D."/>
            <person name="Fedorova N."/>
            <person name="Kim H.S."/>
            <person name="Shabalina S.A."/>
            <person name="Pearson T.R."/>
            <person name="Brinkac L."/>
            <person name="Tan P."/>
            <person name="Nandi T."/>
            <person name="Crabtree J."/>
            <person name="Badger J."/>
            <person name="Beckstrom-Sternberg S."/>
            <person name="Saqib M."/>
            <person name="Schutzer S.E."/>
            <person name="Keim P."/>
            <person name="Nierman W.C."/>
        </authorList>
    </citation>
    <scope>NUCLEOTIDE SEQUENCE [LARGE SCALE GENOMIC DNA]</scope>
    <source>
        <strain>1106a</strain>
    </source>
</reference>
<name>HTPG_BURP0</name>
<protein>
    <recommendedName>
        <fullName evidence="1">Chaperone protein HtpG</fullName>
    </recommendedName>
    <alternativeName>
        <fullName evidence="1">Heat shock protein HtpG</fullName>
    </alternativeName>
    <alternativeName>
        <fullName evidence="1">High temperature protein G</fullName>
    </alternativeName>
</protein>
<gene>
    <name evidence="1" type="primary">htpG</name>
    <name type="ordered locus">BURPS1106A_1167</name>
</gene>
<proteinExistence type="inferred from homology"/>
<comment type="function">
    <text evidence="1">Molecular chaperone. Has ATPase activity.</text>
</comment>
<comment type="subunit">
    <text evidence="1">Homodimer.</text>
</comment>
<comment type="subcellular location">
    <subcellularLocation>
        <location evidence="1">Cytoplasm</location>
    </subcellularLocation>
</comment>
<comment type="similarity">
    <text evidence="1">Belongs to the heat shock protein 90 family.</text>
</comment>
<accession>A3NSX5</accession>